<name>LEXA_AERS4</name>
<dbReference type="EC" id="3.4.21.88" evidence="1"/>
<dbReference type="EMBL" id="CP000644">
    <property type="protein sequence ID" value="ABO92135.1"/>
    <property type="molecule type" value="Genomic_DNA"/>
</dbReference>
<dbReference type="RefSeq" id="WP_005321237.1">
    <property type="nucleotide sequence ID" value="NC_009348.1"/>
</dbReference>
<dbReference type="SMR" id="A4STB3"/>
<dbReference type="STRING" id="29491.GCA_000820065_04464"/>
<dbReference type="MEROPS" id="S24.001"/>
<dbReference type="GeneID" id="79877642"/>
<dbReference type="KEGG" id="asa:ASA_4206"/>
<dbReference type="eggNOG" id="COG1974">
    <property type="taxonomic scope" value="Bacteria"/>
</dbReference>
<dbReference type="HOGENOM" id="CLU_066192_45_3_6"/>
<dbReference type="Proteomes" id="UP000000225">
    <property type="component" value="Chromosome"/>
</dbReference>
<dbReference type="GO" id="GO:0003677">
    <property type="term" value="F:DNA binding"/>
    <property type="evidence" value="ECO:0007669"/>
    <property type="project" value="UniProtKB-UniRule"/>
</dbReference>
<dbReference type="GO" id="GO:0004252">
    <property type="term" value="F:serine-type endopeptidase activity"/>
    <property type="evidence" value="ECO:0007669"/>
    <property type="project" value="UniProtKB-UniRule"/>
</dbReference>
<dbReference type="GO" id="GO:0006281">
    <property type="term" value="P:DNA repair"/>
    <property type="evidence" value="ECO:0007669"/>
    <property type="project" value="UniProtKB-UniRule"/>
</dbReference>
<dbReference type="GO" id="GO:0006260">
    <property type="term" value="P:DNA replication"/>
    <property type="evidence" value="ECO:0007669"/>
    <property type="project" value="UniProtKB-UniRule"/>
</dbReference>
<dbReference type="GO" id="GO:0045892">
    <property type="term" value="P:negative regulation of DNA-templated transcription"/>
    <property type="evidence" value="ECO:0007669"/>
    <property type="project" value="UniProtKB-UniRule"/>
</dbReference>
<dbReference type="GO" id="GO:0006508">
    <property type="term" value="P:proteolysis"/>
    <property type="evidence" value="ECO:0007669"/>
    <property type="project" value="InterPro"/>
</dbReference>
<dbReference type="GO" id="GO:0009432">
    <property type="term" value="P:SOS response"/>
    <property type="evidence" value="ECO:0007669"/>
    <property type="project" value="UniProtKB-UniRule"/>
</dbReference>
<dbReference type="CDD" id="cd06529">
    <property type="entry name" value="S24_LexA-like"/>
    <property type="match status" value="1"/>
</dbReference>
<dbReference type="FunFam" id="1.10.10.10:FF:000009">
    <property type="entry name" value="LexA repressor"/>
    <property type="match status" value="1"/>
</dbReference>
<dbReference type="FunFam" id="2.10.109.10:FF:000001">
    <property type="entry name" value="LexA repressor"/>
    <property type="match status" value="1"/>
</dbReference>
<dbReference type="Gene3D" id="2.10.109.10">
    <property type="entry name" value="Umud Fragment, subunit A"/>
    <property type="match status" value="1"/>
</dbReference>
<dbReference type="Gene3D" id="1.10.10.10">
    <property type="entry name" value="Winged helix-like DNA-binding domain superfamily/Winged helix DNA-binding domain"/>
    <property type="match status" value="1"/>
</dbReference>
<dbReference type="HAMAP" id="MF_00015">
    <property type="entry name" value="LexA"/>
    <property type="match status" value="1"/>
</dbReference>
<dbReference type="InterPro" id="IPR006200">
    <property type="entry name" value="LexA"/>
</dbReference>
<dbReference type="InterPro" id="IPR039418">
    <property type="entry name" value="LexA-like"/>
</dbReference>
<dbReference type="InterPro" id="IPR036286">
    <property type="entry name" value="LexA/Signal_pep-like_sf"/>
</dbReference>
<dbReference type="InterPro" id="IPR006199">
    <property type="entry name" value="LexA_DNA-bd_dom"/>
</dbReference>
<dbReference type="InterPro" id="IPR050077">
    <property type="entry name" value="LexA_repressor"/>
</dbReference>
<dbReference type="InterPro" id="IPR006197">
    <property type="entry name" value="Peptidase_S24_LexA"/>
</dbReference>
<dbReference type="InterPro" id="IPR015927">
    <property type="entry name" value="Peptidase_S24_S26A/B/C"/>
</dbReference>
<dbReference type="InterPro" id="IPR036388">
    <property type="entry name" value="WH-like_DNA-bd_sf"/>
</dbReference>
<dbReference type="InterPro" id="IPR036390">
    <property type="entry name" value="WH_DNA-bd_sf"/>
</dbReference>
<dbReference type="NCBIfam" id="TIGR00498">
    <property type="entry name" value="lexA"/>
    <property type="match status" value="1"/>
</dbReference>
<dbReference type="PANTHER" id="PTHR33516">
    <property type="entry name" value="LEXA REPRESSOR"/>
    <property type="match status" value="1"/>
</dbReference>
<dbReference type="PANTHER" id="PTHR33516:SF2">
    <property type="entry name" value="LEXA REPRESSOR-RELATED"/>
    <property type="match status" value="1"/>
</dbReference>
<dbReference type="Pfam" id="PF01726">
    <property type="entry name" value="LexA_DNA_bind"/>
    <property type="match status" value="1"/>
</dbReference>
<dbReference type="Pfam" id="PF00717">
    <property type="entry name" value="Peptidase_S24"/>
    <property type="match status" value="1"/>
</dbReference>
<dbReference type="PRINTS" id="PR00726">
    <property type="entry name" value="LEXASERPTASE"/>
</dbReference>
<dbReference type="SUPFAM" id="SSF51306">
    <property type="entry name" value="LexA/Signal peptidase"/>
    <property type="match status" value="1"/>
</dbReference>
<dbReference type="SUPFAM" id="SSF46785">
    <property type="entry name" value="Winged helix' DNA-binding domain"/>
    <property type="match status" value="1"/>
</dbReference>
<accession>A4STB3</accession>
<proteinExistence type="inferred from homology"/>
<keyword id="KW-0068">Autocatalytic cleavage</keyword>
<keyword id="KW-0227">DNA damage</keyword>
<keyword id="KW-0234">DNA repair</keyword>
<keyword id="KW-0235">DNA replication</keyword>
<keyword id="KW-0238">DNA-binding</keyword>
<keyword id="KW-0378">Hydrolase</keyword>
<keyword id="KW-0678">Repressor</keyword>
<keyword id="KW-0742">SOS response</keyword>
<keyword id="KW-0804">Transcription</keyword>
<keyword id="KW-0805">Transcription regulation</keyword>
<protein>
    <recommendedName>
        <fullName evidence="1">LexA repressor</fullName>
        <ecNumber evidence="1">3.4.21.88</ecNumber>
    </recommendedName>
</protein>
<comment type="function">
    <text evidence="1">Represses a number of genes involved in the response to DNA damage (SOS response), including recA and lexA. In the presence of single-stranded DNA, RecA interacts with LexA causing an autocatalytic cleavage which disrupts the DNA-binding part of LexA, leading to derepression of the SOS regulon and eventually DNA repair.</text>
</comment>
<comment type="catalytic activity">
    <reaction evidence="1">
        <text>Hydrolysis of Ala-|-Gly bond in repressor LexA.</text>
        <dbReference type="EC" id="3.4.21.88"/>
    </reaction>
</comment>
<comment type="subunit">
    <text evidence="1">Homodimer.</text>
</comment>
<comment type="similarity">
    <text evidence="1">Belongs to the peptidase S24 family.</text>
</comment>
<organism>
    <name type="scientific">Aeromonas salmonicida (strain A449)</name>
    <dbReference type="NCBI Taxonomy" id="382245"/>
    <lineage>
        <taxon>Bacteria</taxon>
        <taxon>Pseudomonadati</taxon>
        <taxon>Pseudomonadota</taxon>
        <taxon>Gammaproteobacteria</taxon>
        <taxon>Aeromonadales</taxon>
        <taxon>Aeromonadaceae</taxon>
        <taxon>Aeromonas</taxon>
    </lineage>
</organism>
<feature type="chain" id="PRO_1000001253" description="LexA repressor">
    <location>
        <begin position="1"/>
        <end position="207"/>
    </location>
</feature>
<feature type="DNA-binding region" description="H-T-H motif" evidence="1">
    <location>
        <begin position="28"/>
        <end position="48"/>
    </location>
</feature>
<feature type="active site" description="For autocatalytic cleavage activity" evidence="1">
    <location>
        <position position="124"/>
    </location>
</feature>
<feature type="active site" description="For autocatalytic cleavage activity" evidence="1">
    <location>
        <position position="161"/>
    </location>
</feature>
<feature type="site" description="Cleavage; by autolysis" evidence="1">
    <location>
        <begin position="89"/>
        <end position="90"/>
    </location>
</feature>
<evidence type="ECO:0000255" key="1">
    <source>
        <dbReference type="HAMAP-Rule" id="MF_00015"/>
    </source>
</evidence>
<sequence>MKPLTPRQAEVLELIKVNMSETGMPPTRAEIAQKLGFKSANAAEEHLKALAKKGVIEIMPGTSRGIRLLIEEEAVLEETGLPLIGKVAAGEPILAQEHIESHYQVDPALFHPRADFLLRVQGMSMKNIGILDGDLLAVHKTQEVRNGQVVVARLDEDVTVKRFQRKGSQVWLLPENEELEPIAVDLSCQQLTIEGLAVGVIRNADWM</sequence>
<gene>
    <name evidence="1" type="primary">lexA</name>
    <name type="ordered locus">ASA_4206</name>
</gene>
<reference key="1">
    <citation type="journal article" date="2008" name="BMC Genomics">
        <title>The genome of Aeromonas salmonicida subsp. salmonicida A449: insights into the evolution of a fish pathogen.</title>
        <authorList>
            <person name="Reith M.E."/>
            <person name="Singh R.K."/>
            <person name="Curtis B."/>
            <person name="Boyd J.M."/>
            <person name="Bouevitch A."/>
            <person name="Kimball J."/>
            <person name="Munholland J."/>
            <person name="Murphy C."/>
            <person name="Sarty D."/>
            <person name="Williams J."/>
            <person name="Nash J.H."/>
            <person name="Johnson S.C."/>
            <person name="Brown L.L."/>
        </authorList>
    </citation>
    <scope>NUCLEOTIDE SEQUENCE [LARGE SCALE GENOMIC DNA]</scope>
    <source>
        <strain>A449</strain>
    </source>
</reference>